<gene>
    <name evidence="1" type="primary">tsf</name>
    <name type="ordered locus">PST_1538</name>
</gene>
<accession>A4VJS2</accession>
<dbReference type="EMBL" id="CP000304">
    <property type="protein sequence ID" value="ABP79223.1"/>
    <property type="molecule type" value="Genomic_DNA"/>
</dbReference>
<dbReference type="RefSeq" id="WP_011912701.1">
    <property type="nucleotide sequence ID" value="NC_009434.1"/>
</dbReference>
<dbReference type="SMR" id="A4VJS2"/>
<dbReference type="GeneID" id="66820684"/>
<dbReference type="KEGG" id="psa:PST_1538"/>
<dbReference type="eggNOG" id="COG0264">
    <property type="taxonomic scope" value="Bacteria"/>
</dbReference>
<dbReference type="HOGENOM" id="CLU_047155_0_2_6"/>
<dbReference type="Proteomes" id="UP000000233">
    <property type="component" value="Chromosome"/>
</dbReference>
<dbReference type="GO" id="GO:0005737">
    <property type="term" value="C:cytoplasm"/>
    <property type="evidence" value="ECO:0007669"/>
    <property type="project" value="UniProtKB-SubCell"/>
</dbReference>
<dbReference type="GO" id="GO:0003746">
    <property type="term" value="F:translation elongation factor activity"/>
    <property type="evidence" value="ECO:0007669"/>
    <property type="project" value="UniProtKB-UniRule"/>
</dbReference>
<dbReference type="CDD" id="cd14275">
    <property type="entry name" value="UBA_EF-Ts"/>
    <property type="match status" value="1"/>
</dbReference>
<dbReference type="FunFam" id="1.10.286.20:FF:000001">
    <property type="entry name" value="Elongation factor Ts"/>
    <property type="match status" value="1"/>
</dbReference>
<dbReference type="FunFam" id="1.10.8.10:FF:000001">
    <property type="entry name" value="Elongation factor Ts"/>
    <property type="match status" value="1"/>
</dbReference>
<dbReference type="Gene3D" id="1.10.286.20">
    <property type="match status" value="1"/>
</dbReference>
<dbReference type="Gene3D" id="1.10.8.10">
    <property type="entry name" value="DNA helicase RuvA subunit, C-terminal domain"/>
    <property type="match status" value="1"/>
</dbReference>
<dbReference type="Gene3D" id="3.30.479.20">
    <property type="entry name" value="Elongation factor Ts, dimerisation domain"/>
    <property type="match status" value="2"/>
</dbReference>
<dbReference type="HAMAP" id="MF_00050">
    <property type="entry name" value="EF_Ts"/>
    <property type="match status" value="1"/>
</dbReference>
<dbReference type="InterPro" id="IPR036402">
    <property type="entry name" value="EF-Ts_dimer_sf"/>
</dbReference>
<dbReference type="InterPro" id="IPR001816">
    <property type="entry name" value="Transl_elong_EFTs/EF1B"/>
</dbReference>
<dbReference type="InterPro" id="IPR014039">
    <property type="entry name" value="Transl_elong_EFTs/EF1B_dimer"/>
</dbReference>
<dbReference type="InterPro" id="IPR018101">
    <property type="entry name" value="Transl_elong_Ts_CS"/>
</dbReference>
<dbReference type="InterPro" id="IPR009060">
    <property type="entry name" value="UBA-like_sf"/>
</dbReference>
<dbReference type="NCBIfam" id="TIGR00116">
    <property type="entry name" value="tsf"/>
    <property type="match status" value="1"/>
</dbReference>
<dbReference type="PANTHER" id="PTHR11741">
    <property type="entry name" value="ELONGATION FACTOR TS"/>
    <property type="match status" value="1"/>
</dbReference>
<dbReference type="PANTHER" id="PTHR11741:SF0">
    <property type="entry name" value="ELONGATION FACTOR TS, MITOCHONDRIAL"/>
    <property type="match status" value="1"/>
</dbReference>
<dbReference type="Pfam" id="PF00889">
    <property type="entry name" value="EF_TS"/>
    <property type="match status" value="1"/>
</dbReference>
<dbReference type="SUPFAM" id="SSF54713">
    <property type="entry name" value="Elongation factor Ts (EF-Ts), dimerisation domain"/>
    <property type="match status" value="2"/>
</dbReference>
<dbReference type="SUPFAM" id="SSF46934">
    <property type="entry name" value="UBA-like"/>
    <property type="match status" value="1"/>
</dbReference>
<dbReference type="PROSITE" id="PS01126">
    <property type="entry name" value="EF_TS_1"/>
    <property type="match status" value="1"/>
</dbReference>
<dbReference type="PROSITE" id="PS01127">
    <property type="entry name" value="EF_TS_2"/>
    <property type="match status" value="1"/>
</dbReference>
<reference key="1">
    <citation type="journal article" date="2008" name="Proc. Natl. Acad. Sci. U.S.A.">
        <title>Nitrogen fixation island and rhizosphere competence traits in the genome of root-associated Pseudomonas stutzeri A1501.</title>
        <authorList>
            <person name="Yan Y."/>
            <person name="Yang J."/>
            <person name="Dou Y."/>
            <person name="Chen M."/>
            <person name="Ping S."/>
            <person name="Peng J."/>
            <person name="Lu W."/>
            <person name="Zhang W."/>
            <person name="Yao Z."/>
            <person name="Li H."/>
            <person name="Liu W."/>
            <person name="He S."/>
            <person name="Geng L."/>
            <person name="Zhang X."/>
            <person name="Yang F."/>
            <person name="Yu H."/>
            <person name="Zhan Y."/>
            <person name="Li D."/>
            <person name="Lin Z."/>
            <person name="Wang Y."/>
            <person name="Elmerich C."/>
            <person name="Lin M."/>
            <person name="Jin Q."/>
        </authorList>
    </citation>
    <scope>NUCLEOTIDE SEQUENCE [LARGE SCALE GENOMIC DNA]</scope>
    <source>
        <strain>A1501</strain>
    </source>
</reference>
<protein>
    <recommendedName>
        <fullName evidence="1">Elongation factor Ts</fullName>
        <shortName evidence="1">EF-Ts</shortName>
    </recommendedName>
</protein>
<name>EFTS_STUS1</name>
<proteinExistence type="inferred from homology"/>
<keyword id="KW-0963">Cytoplasm</keyword>
<keyword id="KW-0251">Elongation factor</keyword>
<keyword id="KW-0648">Protein biosynthesis</keyword>
<keyword id="KW-1185">Reference proteome</keyword>
<feature type="chain" id="PRO_1000006156" description="Elongation factor Ts">
    <location>
        <begin position="1"/>
        <end position="287"/>
    </location>
</feature>
<feature type="region of interest" description="Involved in Mg(2+) ion dislocation from EF-Tu" evidence="1">
    <location>
        <begin position="80"/>
        <end position="83"/>
    </location>
</feature>
<sequence length="287" mass="30508">MAEITAALVKELRERTGQGMMECKKALVAAGGDIEKAIDDMRASGAIKAAKKSGNIAAEGSIAVRVEGGRGLIIEVNSQTDFLALQDDFKAFVKESLDEAFEQKLTEVAPLIASRESAREALVAKCGENVNIRRLSAVEGEVVGAYLHGHRIGVLVTLKGGDAELAKDIAMHVAASNPAVLSPADVSEELIAKEKEIFLQLNADKIAGKPENIVENMIKGRINKFLAEASLVEQPFVKDPEVKVGDLAKKAGAEIVSFVRYEVGEGIEKAEVDFAAEVAAQVAATKK</sequence>
<evidence type="ECO:0000255" key="1">
    <source>
        <dbReference type="HAMAP-Rule" id="MF_00050"/>
    </source>
</evidence>
<organism>
    <name type="scientific">Stutzerimonas stutzeri (strain A1501)</name>
    <name type="common">Pseudomonas stutzeri</name>
    <dbReference type="NCBI Taxonomy" id="379731"/>
    <lineage>
        <taxon>Bacteria</taxon>
        <taxon>Pseudomonadati</taxon>
        <taxon>Pseudomonadota</taxon>
        <taxon>Gammaproteobacteria</taxon>
        <taxon>Pseudomonadales</taxon>
        <taxon>Pseudomonadaceae</taxon>
        <taxon>Stutzerimonas</taxon>
    </lineage>
</organism>
<comment type="function">
    <text evidence="1">Associates with the EF-Tu.GDP complex and induces the exchange of GDP to GTP. It remains bound to the aminoacyl-tRNA.EF-Tu.GTP complex up to the GTP hydrolysis stage on the ribosome.</text>
</comment>
<comment type="subcellular location">
    <subcellularLocation>
        <location evidence="1">Cytoplasm</location>
    </subcellularLocation>
</comment>
<comment type="similarity">
    <text evidence="1">Belongs to the EF-Ts family.</text>
</comment>